<reference key="1">
    <citation type="journal article" date="1998" name="Science">
        <title>Genome sequence of the nematode C. elegans: a platform for investigating biology.</title>
        <authorList>
            <consortium name="The C. elegans sequencing consortium"/>
        </authorList>
    </citation>
    <scope>NUCLEOTIDE SEQUENCE [LARGE SCALE GENOMIC DNA]</scope>
    <source>
        <strain>Bristol N2</strain>
    </source>
</reference>
<reference key="2">
    <citation type="journal article" date="2007" name="Mol. Cell. Proteomics">
        <title>Proteomics reveals N-linked glycoprotein diversity in Caenorhabditis elegans and suggests an atypical translocation mechanism for integral membrane proteins.</title>
        <authorList>
            <person name="Kaji H."/>
            <person name="Kamiie J."/>
            <person name="Kawakami H."/>
            <person name="Kido K."/>
            <person name="Yamauchi Y."/>
            <person name="Shinkawa T."/>
            <person name="Taoka M."/>
            <person name="Takahashi N."/>
            <person name="Isobe T."/>
        </authorList>
    </citation>
    <scope>GLYCOSYLATION [LARGE SCALE ANALYSIS] AT ASN-323</scope>
    <scope>IDENTIFICATION BY MASS SPECTROMETRY</scope>
    <source>
        <strain>Bristol N2</strain>
    </source>
</reference>
<proteinExistence type="evidence at protein level"/>
<gene>
    <name type="primary">pho-5</name>
    <name type="ORF">B0361.7</name>
</gene>
<sequence length="422" mass="48409">MLLLLVLLIGASGINAVVYKEVPIQANTDTLEYVHTVWRHGDRTPAELLFPDDITKWPEGLGELTEQGAAQQYRLGQWLKRRYGSWLGEKFNRNAIYIRSSDYNRTLMSAQANMAGLFPPKYPIAGGLMWQPIPVHTISKPTDKELYEEASCPTAEIEMNAQWKSTKANGIRKKFARELSFFSQKLNLPNMELKATWRIFDNLFCEKQNNITWPSWMNSSIFERVDQLYNEVSQLEFHTDTLRRLRGGTLLEEIFHRFSDKASGSLGKEAKFYAYSAHDSTIAALLATLGVFYDIYPKYATCLLIEMHKLANETRLIRVFHKNETDIDRLIEYSIPGCDDPCTLQKLGDDLKKYFPEDWEAECGLKTSFQFIYLVIISILVISTVCSCTMLFVEKQKRKILRFPVDGLRDDTAPMLGGDDSD</sequence>
<protein>
    <recommendedName>
        <fullName>Putative acid phosphatase 5</fullName>
        <ecNumber>3.1.3.2</ecNumber>
    </recommendedName>
</protein>
<feature type="signal peptide" evidence="2">
    <location>
        <begin position="1"/>
        <end position="13"/>
    </location>
</feature>
<feature type="chain" id="PRO_0000023968" description="Putative acid phosphatase 5">
    <location>
        <begin position="14"/>
        <end position="422"/>
    </location>
</feature>
<feature type="active site" description="Nucleophile" evidence="1">
    <location>
        <position position="40"/>
    </location>
</feature>
<feature type="active site" description="Proton donor" evidence="1">
    <location>
        <position position="279"/>
    </location>
</feature>
<feature type="glycosylation site" description="N-linked (GlcNAc...) asparagine" evidence="2">
    <location>
        <position position="104"/>
    </location>
</feature>
<feature type="glycosylation site" description="N-linked (GlcNAc...) asparagine" evidence="2">
    <location>
        <position position="210"/>
    </location>
</feature>
<feature type="glycosylation site" description="N-linked (GlcNAc...) asparagine" evidence="2">
    <location>
        <position position="218"/>
    </location>
</feature>
<feature type="glycosylation site" description="N-linked (GlcNAc...) asparagine" evidence="2">
    <location>
        <position position="312"/>
    </location>
</feature>
<feature type="glycosylation site" description="N-linked (GlcNAc...) asparagine" evidence="3">
    <location>
        <position position="323"/>
    </location>
</feature>
<feature type="disulfide bond" evidence="1">
    <location>
        <begin position="152"/>
        <end position="363"/>
    </location>
</feature>
<feature type="disulfide bond" evidence="1">
    <location>
        <begin position="205"/>
        <end position="302"/>
    </location>
</feature>
<feature type="disulfide bond" evidence="1">
    <location>
        <begin position="338"/>
        <end position="342"/>
    </location>
</feature>
<dbReference type="EC" id="3.1.3.2"/>
<dbReference type="EMBL" id="FO080185">
    <property type="protein sequence ID" value="CCD61822.1"/>
    <property type="molecule type" value="Genomic_DNA"/>
</dbReference>
<dbReference type="RefSeq" id="NP_498604.2">
    <property type="nucleotide sequence ID" value="NM_066203.7"/>
</dbReference>
<dbReference type="SMR" id="Q10944"/>
<dbReference type="FunCoup" id="Q10944">
    <property type="interactions" value="876"/>
</dbReference>
<dbReference type="STRING" id="6239.B0361.7.1"/>
<dbReference type="GlyCosmos" id="Q10944">
    <property type="glycosylation" value="5 sites, No reported glycans"/>
</dbReference>
<dbReference type="iPTMnet" id="Q10944"/>
<dbReference type="PaxDb" id="6239-B0361.7"/>
<dbReference type="PeptideAtlas" id="Q10944"/>
<dbReference type="EnsemblMetazoa" id="B0361.7.1">
    <property type="protein sequence ID" value="B0361.7.1"/>
    <property type="gene ID" value="WBGene00015161"/>
</dbReference>
<dbReference type="EnsemblMetazoa" id="B0361.7.2">
    <property type="protein sequence ID" value="B0361.7.2"/>
    <property type="gene ID" value="WBGene00015161"/>
</dbReference>
<dbReference type="GeneID" id="176030"/>
<dbReference type="KEGG" id="cel:CELE_B0361.7"/>
<dbReference type="UCSC" id="B0361.7">
    <property type="organism name" value="c. elegans"/>
</dbReference>
<dbReference type="AGR" id="WB:WBGene00015161"/>
<dbReference type="CTD" id="176030"/>
<dbReference type="WormBase" id="B0361.7">
    <property type="protein sequence ID" value="CE32100"/>
    <property type="gene ID" value="WBGene00015161"/>
    <property type="gene designation" value="pho-5"/>
</dbReference>
<dbReference type="eggNOG" id="KOG3720">
    <property type="taxonomic scope" value="Eukaryota"/>
</dbReference>
<dbReference type="GeneTree" id="ENSGT00940000168803"/>
<dbReference type="HOGENOM" id="CLU_030431_1_1_1"/>
<dbReference type="InParanoid" id="Q10944"/>
<dbReference type="OMA" id="YDFENIW"/>
<dbReference type="OrthoDB" id="5821688at2759"/>
<dbReference type="PhylomeDB" id="Q10944"/>
<dbReference type="Reactome" id="R-CEL-6798695">
    <property type="pathway name" value="Neutrophil degranulation"/>
</dbReference>
<dbReference type="PRO" id="PR:Q10944"/>
<dbReference type="Proteomes" id="UP000001940">
    <property type="component" value="Chromosome III"/>
</dbReference>
<dbReference type="Bgee" id="WBGene00015161">
    <property type="expression patterns" value="Expressed in adult organism and 4 other cell types or tissues"/>
</dbReference>
<dbReference type="GO" id="GO:0003993">
    <property type="term" value="F:acid phosphatase activity"/>
    <property type="evidence" value="ECO:0007669"/>
    <property type="project" value="UniProtKB-EC"/>
</dbReference>
<dbReference type="GO" id="GO:0016791">
    <property type="term" value="F:phosphatase activity"/>
    <property type="evidence" value="ECO:0000318"/>
    <property type="project" value="GO_Central"/>
</dbReference>
<dbReference type="CDD" id="cd07061">
    <property type="entry name" value="HP_HAP_like"/>
    <property type="match status" value="1"/>
</dbReference>
<dbReference type="Gene3D" id="3.40.50.1240">
    <property type="entry name" value="Phosphoglycerate mutase-like"/>
    <property type="match status" value="1"/>
</dbReference>
<dbReference type="InterPro" id="IPR033379">
    <property type="entry name" value="Acid_Pase_AS"/>
</dbReference>
<dbReference type="InterPro" id="IPR000560">
    <property type="entry name" value="His_Pase_clade-2"/>
</dbReference>
<dbReference type="InterPro" id="IPR029033">
    <property type="entry name" value="His_PPase_superfam"/>
</dbReference>
<dbReference type="InterPro" id="IPR050645">
    <property type="entry name" value="Histidine_acid_phosphatase"/>
</dbReference>
<dbReference type="PANTHER" id="PTHR11567:SF210">
    <property type="entry name" value="ACID PHOSPHATASE 5-RELATED"/>
    <property type="match status" value="1"/>
</dbReference>
<dbReference type="PANTHER" id="PTHR11567">
    <property type="entry name" value="ACID PHOSPHATASE-RELATED"/>
    <property type="match status" value="1"/>
</dbReference>
<dbReference type="Pfam" id="PF00328">
    <property type="entry name" value="His_Phos_2"/>
    <property type="match status" value="1"/>
</dbReference>
<dbReference type="SUPFAM" id="SSF53254">
    <property type="entry name" value="Phosphoglycerate mutase-like"/>
    <property type="match status" value="1"/>
</dbReference>
<dbReference type="PROSITE" id="PS00616">
    <property type="entry name" value="HIS_ACID_PHOSPHAT_1"/>
    <property type="match status" value="1"/>
</dbReference>
<dbReference type="PROSITE" id="PS00778">
    <property type="entry name" value="HIS_ACID_PHOSPHAT_2"/>
    <property type="match status" value="1"/>
</dbReference>
<comment type="catalytic activity">
    <reaction>
        <text>a phosphate monoester + H2O = an alcohol + phosphate</text>
        <dbReference type="Rhea" id="RHEA:15017"/>
        <dbReference type="ChEBI" id="CHEBI:15377"/>
        <dbReference type="ChEBI" id="CHEBI:30879"/>
        <dbReference type="ChEBI" id="CHEBI:43474"/>
        <dbReference type="ChEBI" id="CHEBI:67140"/>
        <dbReference type="EC" id="3.1.3.2"/>
    </reaction>
</comment>
<comment type="similarity">
    <text evidence="4">Belongs to the histidine acid phosphatase family.</text>
</comment>
<name>PHO5_CAEEL</name>
<accession>Q10944</accession>
<evidence type="ECO:0000250" key="1"/>
<evidence type="ECO:0000255" key="2"/>
<evidence type="ECO:0000269" key="3">
    <source>
    </source>
</evidence>
<evidence type="ECO:0000305" key="4"/>
<keyword id="KW-1015">Disulfide bond</keyword>
<keyword id="KW-0325">Glycoprotein</keyword>
<keyword id="KW-0378">Hydrolase</keyword>
<keyword id="KW-1185">Reference proteome</keyword>
<keyword id="KW-0732">Signal</keyword>
<organism>
    <name type="scientific">Caenorhabditis elegans</name>
    <dbReference type="NCBI Taxonomy" id="6239"/>
    <lineage>
        <taxon>Eukaryota</taxon>
        <taxon>Metazoa</taxon>
        <taxon>Ecdysozoa</taxon>
        <taxon>Nematoda</taxon>
        <taxon>Chromadorea</taxon>
        <taxon>Rhabditida</taxon>
        <taxon>Rhabditina</taxon>
        <taxon>Rhabditomorpha</taxon>
        <taxon>Rhabditoidea</taxon>
        <taxon>Rhabditidae</taxon>
        <taxon>Peloderinae</taxon>
        <taxon>Caenorhabditis</taxon>
    </lineage>
</organism>